<organism>
    <name type="scientific">Mus musculus</name>
    <name type="common">Mouse</name>
    <dbReference type="NCBI Taxonomy" id="10090"/>
    <lineage>
        <taxon>Eukaryota</taxon>
        <taxon>Metazoa</taxon>
        <taxon>Chordata</taxon>
        <taxon>Craniata</taxon>
        <taxon>Vertebrata</taxon>
        <taxon>Euteleostomi</taxon>
        <taxon>Mammalia</taxon>
        <taxon>Eutheria</taxon>
        <taxon>Euarchontoglires</taxon>
        <taxon>Glires</taxon>
        <taxon>Rodentia</taxon>
        <taxon>Myomorpha</taxon>
        <taxon>Muroidea</taxon>
        <taxon>Muridae</taxon>
        <taxon>Murinae</taxon>
        <taxon>Mus</taxon>
        <taxon>Mus</taxon>
    </lineage>
</organism>
<sequence>MFLLLVLLVAALPVNAEGGEIIWGTESKPHSRPYMAYIRFNDSKSVYRCGGFLVARDIVMTAAHCNGKVINVTLGIHNLKKKKNTQLIPVSEAIPHESFDNETLVNDIMLLKLERKAQLNSAVDTIALPKSKDWVKPGQVCTVAGWGKLANCTLSDTLQEVNLEVQKGQKCRSMSQTYNDSIQLCVGNPSENKATGKGDSGGPFVCNGVVQGIVSCRLCTGTLPRVFTRISSFMPWIRKTMKLLQQP</sequence>
<name>MCPT8_MOUSE</name>
<feature type="signal peptide" evidence="2">
    <location>
        <begin position="1"/>
        <end position="19"/>
    </location>
</feature>
<feature type="propeptide" id="PRO_0000027457" description="Activation peptide">
    <location>
        <position position="20"/>
    </location>
</feature>
<feature type="chain" id="PRO_0000027458" description="Mast cell protease 8">
    <location>
        <begin position="21"/>
        <end position="247"/>
    </location>
</feature>
<feature type="domain" description="Peptidase S1" evidence="3">
    <location>
        <begin position="21"/>
        <end position="242"/>
    </location>
</feature>
<feature type="active site" description="Charge relay system" evidence="1">
    <location>
        <position position="64"/>
    </location>
</feature>
<feature type="active site" description="Charge relay system" evidence="1">
    <location>
        <position position="107"/>
    </location>
</feature>
<feature type="active site" description="Charge relay system" evidence="1">
    <location>
        <position position="200"/>
    </location>
</feature>
<feature type="glycosylation site" description="N-linked (GlcNAc...) asparagine" evidence="2">
    <location>
        <position position="41"/>
    </location>
</feature>
<feature type="glycosylation site" description="N-linked (GlcNAc...) asparagine" evidence="2">
    <location>
        <position position="71"/>
    </location>
</feature>
<feature type="glycosylation site" description="N-linked (GlcNAc...) asparagine" evidence="2">
    <location>
        <position position="101"/>
    </location>
</feature>
<feature type="glycosylation site" description="N-linked (GlcNAc...) asparagine" evidence="2">
    <location>
        <position position="151"/>
    </location>
</feature>
<feature type="glycosylation site" description="N-linked (GlcNAc...) asparagine" evidence="2">
    <location>
        <position position="179"/>
    </location>
</feature>
<feature type="disulfide bond" evidence="3">
    <location>
        <begin position="49"/>
        <end position="65"/>
    </location>
</feature>
<feature type="disulfide bond" evidence="3">
    <location>
        <begin position="141"/>
        <end position="206"/>
    </location>
</feature>
<feature type="disulfide bond" evidence="3">
    <location>
        <begin position="171"/>
        <end position="185"/>
    </location>
</feature>
<feature type="sequence conflict" description="In Ref. 2; AAD43900." evidence="4" ref="2">
    <original>I</original>
    <variation>T</variation>
    <location>
        <position position="182"/>
    </location>
</feature>
<comment type="subcellular location">
    <subcellularLocation>
        <location evidence="1">Secreted</location>
    </subcellularLocation>
    <subcellularLocation>
        <location evidence="1">Cytoplasmic granule</location>
    </subcellularLocation>
    <text evidence="1">Secretory granules.</text>
</comment>
<comment type="similarity">
    <text evidence="3">Belongs to the peptidase S1 family. Granzyme subfamily.</text>
</comment>
<gene>
    <name type="primary">Mcpt8</name>
</gene>
<dbReference type="EC" id="3.4.21.-"/>
<dbReference type="EMBL" id="X78545">
    <property type="protein sequence ID" value="CAA55291.1"/>
    <property type="molecule type" value="mRNA"/>
</dbReference>
<dbReference type="EMBL" id="AF119362">
    <property type="protein sequence ID" value="AAD43899.1"/>
    <property type="molecule type" value="Genomic_DNA"/>
</dbReference>
<dbReference type="EMBL" id="AF119363">
    <property type="protein sequence ID" value="AAD43900.1"/>
    <property type="molecule type" value="Genomic_DNA"/>
</dbReference>
<dbReference type="CCDS" id="CCDS27141.1"/>
<dbReference type="PIR" id="S45113">
    <property type="entry name" value="S45113"/>
</dbReference>
<dbReference type="RefSeq" id="NP_032598.1">
    <property type="nucleotide sequence ID" value="NM_008572.1"/>
</dbReference>
<dbReference type="SMR" id="P43430"/>
<dbReference type="FunCoup" id="P43430">
    <property type="interactions" value="176"/>
</dbReference>
<dbReference type="STRING" id="10090.ENSMUSP00000015594"/>
<dbReference type="MEROPS" id="S01.254"/>
<dbReference type="GlyCosmos" id="P43430">
    <property type="glycosylation" value="5 sites, No reported glycans"/>
</dbReference>
<dbReference type="GlyGen" id="P43430">
    <property type="glycosylation" value="5 sites, 2 N-linked glycans (2 sites)"/>
</dbReference>
<dbReference type="PhosphoSitePlus" id="P43430"/>
<dbReference type="PaxDb" id="10090-ENSMUSP00000015594"/>
<dbReference type="ProteomicsDB" id="292198"/>
<dbReference type="DNASU" id="17231"/>
<dbReference type="Ensembl" id="ENSMUST00000015594.9">
    <property type="protein sequence ID" value="ENSMUSP00000015594.8"/>
    <property type="gene ID" value="ENSMUSG00000022157.9"/>
</dbReference>
<dbReference type="GeneID" id="17231"/>
<dbReference type="KEGG" id="mmu:17231"/>
<dbReference type="UCSC" id="uc007ubm.2">
    <property type="organism name" value="mouse"/>
</dbReference>
<dbReference type="AGR" id="MGI:1261780"/>
<dbReference type="CTD" id="17231"/>
<dbReference type="MGI" id="MGI:1261780">
    <property type="gene designation" value="Mcpt8"/>
</dbReference>
<dbReference type="VEuPathDB" id="HostDB:ENSMUSG00000022157"/>
<dbReference type="eggNOG" id="KOG3627">
    <property type="taxonomic scope" value="Eukaryota"/>
</dbReference>
<dbReference type="GeneTree" id="ENSGT01030000234551"/>
<dbReference type="HOGENOM" id="CLU_006842_1_0_1"/>
<dbReference type="InParanoid" id="P43430"/>
<dbReference type="OMA" id="PRIDPYN"/>
<dbReference type="OrthoDB" id="5565075at2759"/>
<dbReference type="PhylomeDB" id="P43430"/>
<dbReference type="TreeFam" id="TF333630"/>
<dbReference type="BioGRID-ORCS" id="17231">
    <property type="hits" value="1 hit in 77 CRISPR screens"/>
</dbReference>
<dbReference type="PRO" id="PR:P43430"/>
<dbReference type="Proteomes" id="UP000000589">
    <property type="component" value="Chromosome 14"/>
</dbReference>
<dbReference type="RNAct" id="P43430">
    <property type="molecule type" value="protein"/>
</dbReference>
<dbReference type="Bgee" id="ENSMUSG00000022157">
    <property type="expression patterns" value="Expressed in granulocyte and 21 other cell types or tissues"/>
</dbReference>
<dbReference type="ExpressionAtlas" id="P43430">
    <property type="expression patterns" value="baseline and differential"/>
</dbReference>
<dbReference type="GO" id="GO:0005615">
    <property type="term" value="C:extracellular space"/>
    <property type="evidence" value="ECO:0007005"/>
    <property type="project" value="BHF-UCL"/>
</dbReference>
<dbReference type="GO" id="GO:0004252">
    <property type="term" value="F:serine-type endopeptidase activity"/>
    <property type="evidence" value="ECO:0007669"/>
    <property type="project" value="InterPro"/>
</dbReference>
<dbReference type="GO" id="GO:0006508">
    <property type="term" value="P:proteolysis"/>
    <property type="evidence" value="ECO:0007669"/>
    <property type="project" value="UniProtKB-KW"/>
</dbReference>
<dbReference type="CDD" id="cd00190">
    <property type="entry name" value="Tryp_SPc"/>
    <property type="match status" value="1"/>
</dbReference>
<dbReference type="FunFam" id="2.40.10.10:FF:000014">
    <property type="entry name" value="Complement factor D"/>
    <property type="match status" value="1"/>
</dbReference>
<dbReference type="Gene3D" id="2.40.10.10">
    <property type="entry name" value="Trypsin-like serine proteases"/>
    <property type="match status" value="2"/>
</dbReference>
<dbReference type="InterPro" id="IPR009003">
    <property type="entry name" value="Peptidase_S1_PA"/>
</dbReference>
<dbReference type="InterPro" id="IPR043504">
    <property type="entry name" value="Peptidase_S1_PA_chymotrypsin"/>
</dbReference>
<dbReference type="InterPro" id="IPR001314">
    <property type="entry name" value="Peptidase_S1A"/>
</dbReference>
<dbReference type="InterPro" id="IPR001254">
    <property type="entry name" value="Trypsin_dom"/>
</dbReference>
<dbReference type="InterPro" id="IPR018114">
    <property type="entry name" value="TRYPSIN_HIS"/>
</dbReference>
<dbReference type="InterPro" id="IPR033116">
    <property type="entry name" value="TRYPSIN_SER"/>
</dbReference>
<dbReference type="PANTHER" id="PTHR24271">
    <property type="entry name" value="KALLIKREIN-RELATED"/>
    <property type="match status" value="1"/>
</dbReference>
<dbReference type="PANTHER" id="PTHR24271:SF22">
    <property type="entry name" value="MAST CELL PROTEASE 8"/>
    <property type="match status" value="1"/>
</dbReference>
<dbReference type="Pfam" id="PF00089">
    <property type="entry name" value="Trypsin"/>
    <property type="match status" value="1"/>
</dbReference>
<dbReference type="PRINTS" id="PR00722">
    <property type="entry name" value="CHYMOTRYPSIN"/>
</dbReference>
<dbReference type="SMART" id="SM00020">
    <property type="entry name" value="Tryp_SPc"/>
    <property type="match status" value="1"/>
</dbReference>
<dbReference type="SUPFAM" id="SSF50494">
    <property type="entry name" value="Trypsin-like serine proteases"/>
    <property type="match status" value="1"/>
</dbReference>
<dbReference type="PROSITE" id="PS50240">
    <property type="entry name" value="TRYPSIN_DOM"/>
    <property type="match status" value="1"/>
</dbReference>
<dbReference type="PROSITE" id="PS00134">
    <property type="entry name" value="TRYPSIN_HIS"/>
    <property type="match status" value="1"/>
</dbReference>
<dbReference type="PROSITE" id="PS00135">
    <property type="entry name" value="TRYPSIN_SER"/>
    <property type="match status" value="1"/>
</dbReference>
<reference key="1">
    <citation type="journal article" date="1998" name="Eur. J. Immunol.">
        <title>Characterization of mouse mast cell protease-8, the first member of a novel subfamily of mouse mast cell serine proteases, distinct from both the classical chymases and tryptases.</title>
        <authorList>
            <person name="Lutzelschwab C."/>
            <person name="Huang M.R."/>
            <person name="Kullberg M.C."/>
            <person name="Aveskogh M."/>
            <person name="Hellman L."/>
        </authorList>
    </citation>
    <scope>NUCLEOTIDE SEQUENCE [MRNA]</scope>
    <source>
        <strain>Leaden X A1</strain>
    </source>
</reference>
<reference key="2">
    <citation type="journal article" date="2001" name="Immunogenetics">
        <title>Characterization of the gene encoding mouse mast cell protease 8 (mMCP-8), and a comparative analysis of hematopoietic serine protease genes.</title>
        <authorList>
            <person name="Lunderius C."/>
            <person name="Hellman L."/>
        </authorList>
    </citation>
    <scope>NUCLEOTIDE SEQUENCE [GENOMIC DNA]</scope>
    <source>
        <strain>129/SvJ</strain>
        <strain>ICR X Swiss Webster</strain>
        <tissue>Liver</tissue>
    </source>
</reference>
<accession>P43430</accession>
<accession>Q9R1F1</accession>
<evidence type="ECO:0000250" key="1"/>
<evidence type="ECO:0000255" key="2"/>
<evidence type="ECO:0000255" key="3">
    <source>
        <dbReference type="PROSITE-ProRule" id="PRU00274"/>
    </source>
</evidence>
<evidence type="ECO:0000305" key="4"/>
<keyword id="KW-1015">Disulfide bond</keyword>
<keyword id="KW-0325">Glycoprotein</keyword>
<keyword id="KW-0378">Hydrolase</keyword>
<keyword id="KW-0645">Protease</keyword>
<keyword id="KW-1185">Reference proteome</keyword>
<keyword id="KW-0964">Secreted</keyword>
<keyword id="KW-0720">Serine protease</keyword>
<keyword id="KW-0732">Signal</keyword>
<keyword id="KW-0865">Zymogen</keyword>
<protein>
    <recommendedName>
        <fullName>Mast cell protease 8</fullName>
        <shortName>mMCP-8</shortName>
        <ecNumber>3.4.21.-</ecNumber>
    </recommendedName>
</protein>
<proteinExistence type="evidence at transcript level"/>